<keyword id="KW-0433">Leucine-rich repeat</keyword>
<keyword id="KW-1185">Reference proteome</keyword>
<keyword id="KW-0677">Repeat</keyword>
<name>FBL69_ARATH</name>
<proteinExistence type="evidence at transcript level"/>
<feature type="chain" id="PRO_0000281969" description="F-box/LRR-repeat protein At3g60040">
    <location>
        <begin position="1"/>
        <end position="449"/>
    </location>
</feature>
<feature type="domain" description="F-box" evidence="1">
    <location>
        <begin position="12"/>
        <end position="64"/>
    </location>
</feature>
<feature type="repeat" description="LRR 1">
    <location>
        <begin position="161"/>
        <end position="188"/>
    </location>
</feature>
<feature type="repeat" description="LRR 2">
    <location>
        <begin position="191"/>
        <end position="215"/>
    </location>
</feature>
<feature type="repeat" description="LRR 3">
    <location>
        <begin position="216"/>
        <end position="237"/>
    </location>
</feature>
<feature type="repeat" description="LRR 4">
    <location>
        <begin position="239"/>
        <end position="263"/>
    </location>
</feature>
<feature type="repeat" description="LRR 5">
    <location>
        <begin position="287"/>
        <end position="312"/>
    </location>
</feature>
<feature type="repeat" description="LRR 6">
    <location>
        <begin position="340"/>
        <end position="365"/>
    </location>
</feature>
<sequence length="449" mass="50706">MDAKMFDTICSRDAISWLPDEVLGKILSLIPTKQAVSTSLLAKKWRTIFRLVDHLELDDSFSLQAVKDQTPGLRKHVRFVFTEDFKIFVDRTLALQCDYPIKNFSLKCHVSKYDERQKACVGRWISNVVGRGVFELDLRMKDPGIHFLPPHLVASKTLVKLTLGTQLCLGQLPSYVSLPSLKSLFIDTIVFYDIEDLCCVLLAGCPVLEELSVHHHDFIATPHTISSPTLKRLSVDYHCPDDVDSASHMSFDLPKLVYLEYSHCALGEYWQINLESLVEAKLDLGLERKVLRMDVTDLIIGIRNVQSLHLSPDSVHVIYSYCRHGLPVFKNLVNLSFGSKNKRGWRLLANLLKQSTKLETLIVKDLNGYTGDVSMPLNKVTSLHILGYRGTADEVKQLKSFIGEFECLELVQVDVAEAAEDNGKILQSKRDLMMLLGVSLPSKCQFKVT</sequence>
<reference key="1">
    <citation type="journal article" date="2000" name="Nature">
        <title>Sequence and analysis of chromosome 3 of the plant Arabidopsis thaliana.</title>
        <authorList>
            <person name="Salanoubat M."/>
            <person name="Lemcke K."/>
            <person name="Rieger M."/>
            <person name="Ansorge W."/>
            <person name="Unseld M."/>
            <person name="Fartmann B."/>
            <person name="Valle G."/>
            <person name="Bloecker H."/>
            <person name="Perez-Alonso M."/>
            <person name="Obermaier B."/>
            <person name="Delseny M."/>
            <person name="Boutry M."/>
            <person name="Grivell L.A."/>
            <person name="Mache R."/>
            <person name="Puigdomenech P."/>
            <person name="De Simone V."/>
            <person name="Choisne N."/>
            <person name="Artiguenave F."/>
            <person name="Robert C."/>
            <person name="Brottier P."/>
            <person name="Wincker P."/>
            <person name="Cattolico L."/>
            <person name="Weissenbach J."/>
            <person name="Saurin W."/>
            <person name="Quetier F."/>
            <person name="Schaefer M."/>
            <person name="Mueller-Auer S."/>
            <person name="Gabel C."/>
            <person name="Fuchs M."/>
            <person name="Benes V."/>
            <person name="Wurmbach E."/>
            <person name="Drzonek H."/>
            <person name="Erfle H."/>
            <person name="Jordan N."/>
            <person name="Bangert S."/>
            <person name="Wiedelmann R."/>
            <person name="Kranz H."/>
            <person name="Voss H."/>
            <person name="Holland R."/>
            <person name="Brandt P."/>
            <person name="Nyakatura G."/>
            <person name="Vezzi A."/>
            <person name="D'Angelo M."/>
            <person name="Pallavicini A."/>
            <person name="Toppo S."/>
            <person name="Simionati B."/>
            <person name="Conrad A."/>
            <person name="Hornischer K."/>
            <person name="Kauer G."/>
            <person name="Loehnert T.-H."/>
            <person name="Nordsiek G."/>
            <person name="Reichelt J."/>
            <person name="Scharfe M."/>
            <person name="Schoen O."/>
            <person name="Bargues M."/>
            <person name="Terol J."/>
            <person name="Climent J."/>
            <person name="Navarro P."/>
            <person name="Collado C."/>
            <person name="Perez-Perez A."/>
            <person name="Ottenwaelder B."/>
            <person name="Duchemin D."/>
            <person name="Cooke R."/>
            <person name="Laudie M."/>
            <person name="Berger-Llauro C."/>
            <person name="Purnelle B."/>
            <person name="Masuy D."/>
            <person name="de Haan M."/>
            <person name="Maarse A.C."/>
            <person name="Alcaraz J.-P."/>
            <person name="Cottet A."/>
            <person name="Casacuberta E."/>
            <person name="Monfort A."/>
            <person name="Argiriou A."/>
            <person name="Flores M."/>
            <person name="Liguori R."/>
            <person name="Vitale D."/>
            <person name="Mannhaupt G."/>
            <person name="Haase D."/>
            <person name="Schoof H."/>
            <person name="Rudd S."/>
            <person name="Zaccaria P."/>
            <person name="Mewes H.-W."/>
            <person name="Mayer K.F.X."/>
            <person name="Kaul S."/>
            <person name="Town C.D."/>
            <person name="Koo H.L."/>
            <person name="Tallon L.J."/>
            <person name="Jenkins J."/>
            <person name="Rooney T."/>
            <person name="Rizzo M."/>
            <person name="Walts A."/>
            <person name="Utterback T."/>
            <person name="Fujii C.Y."/>
            <person name="Shea T.P."/>
            <person name="Creasy T.H."/>
            <person name="Haas B."/>
            <person name="Maiti R."/>
            <person name="Wu D."/>
            <person name="Peterson J."/>
            <person name="Van Aken S."/>
            <person name="Pai G."/>
            <person name="Militscher J."/>
            <person name="Sellers P."/>
            <person name="Gill J.E."/>
            <person name="Feldblyum T.V."/>
            <person name="Preuss D."/>
            <person name="Lin X."/>
            <person name="Nierman W.C."/>
            <person name="Salzberg S.L."/>
            <person name="White O."/>
            <person name="Venter J.C."/>
            <person name="Fraser C.M."/>
            <person name="Kaneko T."/>
            <person name="Nakamura Y."/>
            <person name="Sato S."/>
            <person name="Kato T."/>
            <person name="Asamizu E."/>
            <person name="Sasamoto S."/>
            <person name="Kimura T."/>
            <person name="Idesawa K."/>
            <person name="Kawashima K."/>
            <person name="Kishida Y."/>
            <person name="Kiyokawa C."/>
            <person name="Kohara M."/>
            <person name="Matsumoto M."/>
            <person name="Matsuno A."/>
            <person name="Muraki A."/>
            <person name="Nakayama S."/>
            <person name="Nakazaki N."/>
            <person name="Shinpo S."/>
            <person name="Takeuchi C."/>
            <person name="Wada T."/>
            <person name="Watanabe A."/>
            <person name="Yamada M."/>
            <person name="Yasuda M."/>
            <person name="Tabata S."/>
        </authorList>
    </citation>
    <scope>NUCLEOTIDE SEQUENCE [LARGE SCALE GENOMIC DNA]</scope>
    <source>
        <strain>cv. Columbia</strain>
    </source>
</reference>
<reference key="2">
    <citation type="journal article" date="2017" name="Plant J.">
        <title>Araport11: a complete reannotation of the Arabidopsis thaliana reference genome.</title>
        <authorList>
            <person name="Cheng C.Y."/>
            <person name="Krishnakumar V."/>
            <person name="Chan A.P."/>
            <person name="Thibaud-Nissen F."/>
            <person name="Schobel S."/>
            <person name="Town C.D."/>
        </authorList>
    </citation>
    <scope>GENOME REANNOTATION</scope>
    <source>
        <strain>cv. Columbia</strain>
    </source>
</reference>
<reference key="3">
    <citation type="journal article" date="2002" name="Science">
        <title>Functional annotation of a full-length Arabidopsis cDNA collection.</title>
        <authorList>
            <person name="Seki M."/>
            <person name="Narusaka M."/>
            <person name="Kamiya A."/>
            <person name="Ishida J."/>
            <person name="Satou M."/>
            <person name="Sakurai T."/>
            <person name="Nakajima M."/>
            <person name="Enju A."/>
            <person name="Akiyama K."/>
            <person name="Oono Y."/>
            <person name="Muramatsu M."/>
            <person name="Hayashizaki Y."/>
            <person name="Kawai J."/>
            <person name="Carninci P."/>
            <person name="Itoh M."/>
            <person name="Ishii Y."/>
            <person name="Arakawa T."/>
            <person name="Shibata K."/>
            <person name="Shinagawa A."/>
            <person name="Shinozaki K."/>
        </authorList>
    </citation>
    <scope>NUCLEOTIDE SEQUENCE [LARGE SCALE MRNA]</scope>
    <source>
        <strain>cv. Columbia</strain>
    </source>
</reference>
<accession>Q8GWI2</accession>
<accession>F4JAL3</accession>
<accession>Q9M1D9</accession>
<gene>
    <name type="ordered locus">At3g60040</name>
    <name type="ORF">T2O9.20</name>
</gene>
<protein>
    <recommendedName>
        <fullName>F-box/LRR-repeat protein At3g60040</fullName>
    </recommendedName>
</protein>
<organism>
    <name type="scientific">Arabidopsis thaliana</name>
    <name type="common">Mouse-ear cress</name>
    <dbReference type="NCBI Taxonomy" id="3702"/>
    <lineage>
        <taxon>Eukaryota</taxon>
        <taxon>Viridiplantae</taxon>
        <taxon>Streptophyta</taxon>
        <taxon>Embryophyta</taxon>
        <taxon>Tracheophyta</taxon>
        <taxon>Spermatophyta</taxon>
        <taxon>Magnoliopsida</taxon>
        <taxon>eudicotyledons</taxon>
        <taxon>Gunneridae</taxon>
        <taxon>Pentapetalae</taxon>
        <taxon>rosids</taxon>
        <taxon>malvids</taxon>
        <taxon>Brassicales</taxon>
        <taxon>Brassicaceae</taxon>
        <taxon>Camelineae</taxon>
        <taxon>Arabidopsis</taxon>
    </lineage>
</organism>
<dbReference type="EMBL" id="AL138658">
    <property type="protein sequence ID" value="CAB75919.1"/>
    <property type="status" value="ALT_SEQ"/>
    <property type="molecule type" value="Genomic_DNA"/>
</dbReference>
<dbReference type="EMBL" id="CP002686">
    <property type="protein sequence ID" value="AEE80005.1"/>
    <property type="status" value="ALT_SEQ"/>
    <property type="molecule type" value="Genomic_DNA"/>
</dbReference>
<dbReference type="EMBL" id="AK118823">
    <property type="protein sequence ID" value="BAC43413.1"/>
    <property type="molecule type" value="mRNA"/>
</dbReference>
<dbReference type="PIR" id="T47828">
    <property type="entry name" value="T47828"/>
</dbReference>
<dbReference type="RefSeq" id="NP_191563.1">
    <property type="nucleotide sequence ID" value="NM_115867.2"/>
</dbReference>
<dbReference type="SMR" id="Q8GWI2"/>
<dbReference type="FunCoup" id="Q8GWI2">
    <property type="interactions" value="7"/>
</dbReference>
<dbReference type="PaxDb" id="3702-AT3G60040.1"/>
<dbReference type="PeptideAtlas" id="Q8GWI2"/>
<dbReference type="ProteomicsDB" id="230711"/>
<dbReference type="GeneID" id="825174"/>
<dbReference type="KEGG" id="ath:AT3G60040"/>
<dbReference type="Araport" id="AT3G60040"/>
<dbReference type="TAIR" id="AT3G60040"/>
<dbReference type="eggNOG" id="KOG4197">
    <property type="taxonomic scope" value="Eukaryota"/>
</dbReference>
<dbReference type="HOGENOM" id="CLU_339319_0_0_1"/>
<dbReference type="InParanoid" id="Q8GWI2"/>
<dbReference type="PhylomeDB" id="Q8GWI2"/>
<dbReference type="PRO" id="PR:Q8GWI2"/>
<dbReference type="Proteomes" id="UP000006548">
    <property type="component" value="Chromosome 3"/>
</dbReference>
<dbReference type="ExpressionAtlas" id="Q8GWI2">
    <property type="expression patterns" value="baseline and differential"/>
</dbReference>
<dbReference type="Gene3D" id="3.80.10.10">
    <property type="entry name" value="Ribonuclease Inhibitor"/>
    <property type="match status" value="1"/>
</dbReference>
<dbReference type="InterPro" id="IPR036047">
    <property type="entry name" value="F-box-like_dom_sf"/>
</dbReference>
<dbReference type="InterPro" id="IPR001810">
    <property type="entry name" value="F-box_dom"/>
</dbReference>
<dbReference type="InterPro" id="IPR055294">
    <property type="entry name" value="FBL60-like"/>
</dbReference>
<dbReference type="InterPro" id="IPR032675">
    <property type="entry name" value="LRR_dom_sf"/>
</dbReference>
<dbReference type="InterPro" id="IPR055411">
    <property type="entry name" value="LRR_FXL15/At3g58940/PEG3-like"/>
</dbReference>
<dbReference type="PANTHER" id="PTHR31293:SF22">
    <property type="entry name" value="BNAC06G06520D PROTEIN"/>
    <property type="match status" value="1"/>
</dbReference>
<dbReference type="PANTHER" id="PTHR31293">
    <property type="entry name" value="RNI-LIKE SUPERFAMILY PROTEIN"/>
    <property type="match status" value="1"/>
</dbReference>
<dbReference type="Pfam" id="PF00646">
    <property type="entry name" value="F-box"/>
    <property type="match status" value="1"/>
</dbReference>
<dbReference type="Pfam" id="PF24758">
    <property type="entry name" value="LRR_At5g56370"/>
    <property type="match status" value="1"/>
</dbReference>
<dbReference type="SUPFAM" id="SSF81383">
    <property type="entry name" value="F-box domain"/>
    <property type="match status" value="1"/>
</dbReference>
<dbReference type="SUPFAM" id="SSF52047">
    <property type="entry name" value="RNI-like"/>
    <property type="match status" value="1"/>
</dbReference>
<dbReference type="PROSITE" id="PS50181">
    <property type="entry name" value="FBOX"/>
    <property type="match status" value="1"/>
</dbReference>
<evidence type="ECO:0000255" key="1">
    <source>
        <dbReference type="PROSITE-ProRule" id="PRU00080"/>
    </source>
</evidence>
<evidence type="ECO:0000305" key="2"/>
<comment type="sequence caution" evidence="2">
    <conflict type="erroneous gene model prediction">
        <sequence resource="EMBL-CDS" id="AEE80005"/>
    </conflict>
</comment>
<comment type="sequence caution" evidence="2">
    <conflict type="erroneous initiation">
        <sequence resource="EMBL-CDS" id="AEE80005"/>
    </conflict>
    <text>Extended N-terminus.</text>
</comment>
<comment type="sequence caution" evidence="2">
    <conflict type="erroneous gene model prediction">
        <sequence resource="EMBL-CDS" id="CAB75919"/>
    </conflict>
</comment>